<organism>
    <name type="scientific">Mycolicibacterium paratuberculosis (strain ATCC BAA-968 / K-10)</name>
    <name type="common">Mycobacterium paratuberculosis</name>
    <dbReference type="NCBI Taxonomy" id="262316"/>
    <lineage>
        <taxon>Bacteria</taxon>
        <taxon>Bacillati</taxon>
        <taxon>Actinomycetota</taxon>
        <taxon>Actinomycetes</taxon>
        <taxon>Mycobacteriales</taxon>
        <taxon>Mycobacteriaceae</taxon>
        <taxon>Mycobacterium</taxon>
        <taxon>Mycobacterium avium complex (MAC)</taxon>
    </lineage>
</organism>
<sequence length="303" mass="33357">MTRTDQDSWDLASSVGATATMVAAARALASTGERPIINDPFAAPLVRAVGLDFFRRLVDGEVAPADPQRGERDLQLETDSIAVRTRFFDDFFTGAARDGIRQSVILAAGLDARAYRLDWPAGAVVYEVDQPKVVEFKTNTMAALDARPAAQLRTVSIDLREDWPEALRANGFDVTQPTSWSAEGLLMYLPPEAQDRLFDNITALSAPGSRLATEYHPDATGTTMAQRAQEFNDRWARVGCDIDLSGLFFDGERSNVVEYLTGRGWRVSARPRRDLFDDYGLAYPEDDETAQFPNIVAVSAELG</sequence>
<evidence type="ECO:0000250" key="1"/>
<evidence type="ECO:0000305" key="2"/>
<accession>Q73S79</accession>
<dbReference type="EC" id="2.1.1.-"/>
<dbReference type="EMBL" id="AE016958">
    <property type="protein sequence ID" value="AAS06747.1"/>
    <property type="molecule type" value="Genomic_DNA"/>
</dbReference>
<dbReference type="RefSeq" id="WP_003873481.1">
    <property type="nucleotide sequence ID" value="NZ_CP106873.1"/>
</dbReference>
<dbReference type="SMR" id="Q73S79"/>
<dbReference type="STRING" id="262316.MAP_4197c"/>
<dbReference type="KEGG" id="mpa:MAP_4197c"/>
<dbReference type="PATRIC" id="fig|262316.17.peg.4469"/>
<dbReference type="eggNOG" id="COG3315">
    <property type="taxonomic scope" value="Bacteria"/>
</dbReference>
<dbReference type="HOGENOM" id="CLU_056160_2_1_11"/>
<dbReference type="Proteomes" id="UP000000580">
    <property type="component" value="Chromosome"/>
</dbReference>
<dbReference type="GO" id="GO:0008168">
    <property type="term" value="F:methyltransferase activity"/>
    <property type="evidence" value="ECO:0007669"/>
    <property type="project" value="UniProtKB-KW"/>
</dbReference>
<dbReference type="GO" id="GO:0032259">
    <property type="term" value="P:methylation"/>
    <property type="evidence" value="ECO:0007669"/>
    <property type="project" value="UniProtKB-KW"/>
</dbReference>
<dbReference type="Gene3D" id="3.40.50.150">
    <property type="entry name" value="Vaccinia Virus protein VP39"/>
    <property type="match status" value="1"/>
</dbReference>
<dbReference type="InterPro" id="IPR007213">
    <property type="entry name" value="Ppm1/Ppm2/Tcmp"/>
</dbReference>
<dbReference type="InterPro" id="IPR029063">
    <property type="entry name" value="SAM-dependent_MTases_sf"/>
</dbReference>
<dbReference type="InterPro" id="IPR011610">
    <property type="entry name" value="SAM_mthyl_Trfase_ML2640-like"/>
</dbReference>
<dbReference type="NCBIfam" id="TIGR00027">
    <property type="entry name" value="mthyl_TIGR00027"/>
    <property type="match status" value="1"/>
</dbReference>
<dbReference type="PANTHER" id="PTHR43619">
    <property type="entry name" value="S-ADENOSYL-L-METHIONINE-DEPENDENT METHYLTRANSFERASE YKTD-RELATED"/>
    <property type="match status" value="1"/>
</dbReference>
<dbReference type="PANTHER" id="PTHR43619:SF2">
    <property type="entry name" value="S-ADENOSYL-L-METHIONINE-DEPENDENT METHYLTRANSFERASES SUPERFAMILY PROTEIN"/>
    <property type="match status" value="1"/>
</dbReference>
<dbReference type="Pfam" id="PF04072">
    <property type="entry name" value="LCM"/>
    <property type="match status" value="1"/>
</dbReference>
<dbReference type="SUPFAM" id="SSF53335">
    <property type="entry name" value="S-adenosyl-L-methionine-dependent methyltransferases"/>
    <property type="match status" value="1"/>
</dbReference>
<proteinExistence type="inferred from homology"/>
<keyword id="KW-0489">Methyltransferase</keyword>
<keyword id="KW-1185">Reference proteome</keyword>
<keyword id="KW-0949">S-adenosyl-L-methionine</keyword>
<keyword id="KW-0808">Transferase</keyword>
<feature type="chain" id="PRO_0000361190" description="Putative S-adenosyl-L-methionine-dependent methyltransferase MAP_4197c">
    <location>
        <begin position="1"/>
        <end position="303"/>
    </location>
</feature>
<feature type="binding site" evidence="1">
    <location>
        <position position="129"/>
    </location>
    <ligand>
        <name>S-adenosyl-L-methionine</name>
        <dbReference type="ChEBI" id="CHEBI:59789"/>
    </ligand>
</feature>
<feature type="binding site" evidence="1">
    <location>
        <begin position="158"/>
        <end position="159"/>
    </location>
    <ligand>
        <name>S-adenosyl-L-methionine</name>
        <dbReference type="ChEBI" id="CHEBI:59789"/>
    </ligand>
</feature>
<gene>
    <name type="ordered locus">MAP_4197c</name>
</gene>
<name>Y4197_MYCPA</name>
<comment type="function">
    <text evidence="1">Exhibits S-adenosyl-L-methionine-dependent methyltransferase activity.</text>
</comment>
<comment type="similarity">
    <text evidence="2">Belongs to the UPF0677 family.</text>
</comment>
<protein>
    <recommendedName>
        <fullName>Putative S-adenosyl-L-methionine-dependent methyltransferase MAP_4197c</fullName>
        <ecNumber>2.1.1.-</ecNumber>
    </recommendedName>
</protein>
<reference key="1">
    <citation type="journal article" date="2005" name="Proc. Natl. Acad. Sci. U.S.A.">
        <title>The complete genome sequence of Mycobacterium avium subspecies paratuberculosis.</title>
        <authorList>
            <person name="Li L."/>
            <person name="Bannantine J.P."/>
            <person name="Zhang Q."/>
            <person name="Amonsin A."/>
            <person name="May B.J."/>
            <person name="Alt D."/>
            <person name="Banerji N."/>
            <person name="Kanjilal S."/>
            <person name="Kapur V."/>
        </authorList>
    </citation>
    <scope>NUCLEOTIDE SEQUENCE [LARGE SCALE GENOMIC DNA]</scope>
    <source>
        <strain>ATCC BAA-968 / K-10</strain>
    </source>
</reference>